<evidence type="ECO:0000255" key="1">
    <source>
        <dbReference type="HAMAP-Rule" id="MF_00333"/>
    </source>
</evidence>
<reference key="1">
    <citation type="journal article" date="2009" name="J. Bacteriol.">
        <title>Genomic sequencing reveals regulatory mutations and recombinational events in the widely used MC4100 lineage of Escherichia coli K-12.</title>
        <authorList>
            <person name="Ferenci T."/>
            <person name="Zhou Z."/>
            <person name="Betteridge T."/>
            <person name="Ren Y."/>
            <person name="Liu Y."/>
            <person name="Feng L."/>
            <person name="Reeves P.R."/>
            <person name="Wang L."/>
        </authorList>
    </citation>
    <scope>NUCLEOTIDE SEQUENCE [LARGE SCALE GENOMIC DNA]</scope>
    <source>
        <strain>K12 / MC4100 / BW2952</strain>
    </source>
</reference>
<name>HEM6_ECOBW</name>
<organism>
    <name type="scientific">Escherichia coli (strain K12 / MC4100 / BW2952)</name>
    <dbReference type="NCBI Taxonomy" id="595496"/>
    <lineage>
        <taxon>Bacteria</taxon>
        <taxon>Pseudomonadati</taxon>
        <taxon>Pseudomonadota</taxon>
        <taxon>Gammaproteobacteria</taxon>
        <taxon>Enterobacterales</taxon>
        <taxon>Enterobacteriaceae</taxon>
        <taxon>Escherichia</taxon>
    </lineage>
</organism>
<accession>C4ZX09</accession>
<comment type="function">
    <text evidence="1">Involved in the heme biosynthesis. Catalyzes the aerobic oxidative decarboxylation of propionate groups of rings A and B of coproporphyrinogen-III to yield the vinyl groups in protoporphyrinogen-IX.</text>
</comment>
<comment type="catalytic activity">
    <reaction evidence="1">
        <text>coproporphyrinogen III + O2 + 2 H(+) = protoporphyrinogen IX + 2 CO2 + 2 H2O</text>
        <dbReference type="Rhea" id="RHEA:18257"/>
        <dbReference type="ChEBI" id="CHEBI:15377"/>
        <dbReference type="ChEBI" id="CHEBI:15378"/>
        <dbReference type="ChEBI" id="CHEBI:15379"/>
        <dbReference type="ChEBI" id="CHEBI:16526"/>
        <dbReference type="ChEBI" id="CHEBI:57307"/>
        <dbReference type="ChEBI" id="CHEBI:57309"/>
        <dbReference type="EC" id="1.3.3.3"/>
    </reaction>
</comment>
<comment type="cofactor">
    <cofactor evidence="1">
        <name>Mn(2+)</name>
        <dbReference type="ChEBI" id="CHEBI:29035"/>
    </cofactor>
</comment>
<comment type="pathway">
    <text evidence="1">Porphyrin-containing compound metabolism; protoporphyrin-IX biosynthesis; protoporphyrinogen-IX from coproporphyrinogen-III (O2 route): step 1/1.</text>
</comment>
<comment type="subunit">
    <text evidence="1">Homodimer.</text>
</comment>
<comment type="subcellular location">
    <subcellularLocation>
        <location evidence="1">Cytoplasm</location>
    </subcellularLocation>
</comment>
<comment type="similarity">
    <text evidence="1">Belongs to the aerobic coproporphyrinogen-III oxidase family.</text>
</comment>
<keyword id="KW-0963">Cytoplasm</keyword>
<keyword id="KW-0350">Heme biosynthesis</keyword>
<keyword id="KW-0464">Manganese</keyword>
<keyword id="KW-0479">Metal-binding</keyword>
<keyword id="KW-0560">Oxidoreductase</keyword>
<keyword id="KW-0627">Porphyrin biosynthesis</keyword>
<dbReference type="EC" id="1.3.3.3" evidence="1"/>
<dbReference type="EMBL" id="CP001396">
    <property type="protein sequence ID" value="ACR62610.1"/>
    <property type="molecule type" value="Genomic_DNA"/>
</dbReference>
<dbReference type="RefSeq" id="WP_000801365.1">
    <property type="nucleotide sequence ID" value="NC_012759.1"/>
</dbReference>
<dbReference type="SMR" id="C4ZX09"/>
<dbReference type="KEGG" id="ebw:BWG_2198"/>
<dbReference type="HOGENOM" id="CLU_026169_0_1_6"/>
<dbReference type="UniPathway" id="UPA00251">
    <property type="reaction ID" value="UER00322"/>
</dbReference>
<dbReference type="GO" id="GO:0005737">
    <property type="term" value="C:cytoplasm"/>
    <property type="evidence" value="ECO:0007669"/>
    <property type="project" value="UniProtKB-SubCell"/>
</dbReference>
<dbReference type="GO" id="GO:0004109">
    <property type="term" value="F:coproporphyrinogen oxidase activity"/>
    <property type="evidence" value="ECO:0007669"/>
    <property type="project" value="UniProtKB-UniRule"/>
</dbReference>
<dbReference type="GO" id="GO:0030145">
    <property type="term" value="F:manganese ion binding"/>
    <property type="evidence" value="ECO:0007669"/>
    <property type="project" value="UniProtKB-UniRule"/>
</dbReference>
<dbReference type="GO" id="GO:0042803">
    <property type="term" value="F:protein homodimerization activity"/>
    <property type="evidence" value="ECO:0000250"/>
    <property type="project" value="UniProtKB"/>
</dbReference>
<dbReference type="GO" id="GO:0006782">
    <property type="term" value="P:protoporphyrinogen IX biosynthetic process"/>
    <property type="evidence" value="ECO:0007669"/>
    <property type="project" value="UniProtKB-UniRule"/>
</dbReference>
<dbReference type="FunFam" id="3.40.1500.10:FF:000001">
    <property type="entry name" value="Oxygen-dependent coproporphyrinogen-III oxidase"/>
    <property type="match status" value="1"/>
</dbReference>
<dbReference type="Gene3D" id="3.40.1500.10">
    <property type="entry name" value="Coproporphyrinogen III oxidase, aerobic"/>
    <property type="match status" value="1"/>
</dbReference>
<dbReference type="HAMAP" id="MF_00333">
    <property type="entry name" value="Coprogen_oxidas"/>
    <property type="match status" value="1"/>
</dbReference>
<dbReference type="InterPro" id="IPR001260">
    <property type="entry name" value="Coprogen_oxidase_aer"/>
</dbReference>
<dbReference type="InterPro" id="IPR036406">
    <property type="entry name" value="Coprogen_oxidase_aer_sf"/>
</dbReference>
<dbReference type="InterPro" id="IPR018375">
    <property type="entry name" value="Coprogen_oxidase_CS"/>
</dbReference>
<dbReference type="NCBIfam" id="NF003727">
    <property type="entry name" value="PRK05330.1"/>
    <property type="match status" value="1"/>
</dbReference>
<dbReference type="PANTHER" id="PTHR10755">
    <property type="entry name" value="COPROPORPHYRINOGEN III OXIDASE, MITOCHONDRIAL"/>
    <property type="match status" value="1"/>
</dbReference>
<dbReference type="PANTHER" id="PTHR10755:SF0">
    <property type="entry name" value="OXYGEN-DEPENDENT COPROPORPHYRINOGEN-III OXIDASE, MITOCHONDRIAL"/>
    <property type="match status" value="1"/>
</dbReference>
<dbReference type="Pfam" id="PF01218">
    <property type="entry name" value="Coprogen_oxidas"/>
    <property type="match status" value="1"/>
</dbReference>
<dbReference type="PIRSF" id="PIRSF000166">
    <property type="entry name" value="Coproporphyri_ox"/>
    <property type="match status" value="1"/>
</dbReference>
<dbReference type="PRINTS" id="PR00073">
    <property type="entry name" value="COPRGNOXDASE"/>
</dbReference>
<dbReference type="SUPFAM" id="SSF102886">
    <property type="entry name" value="Coproporphyrinogen III oxidase"/>
    <property type="match status" value="1"/>
</dbReference>
<dbReference type="PROSITE" id="PS01021">
    <property type="entry name" value="COPROGEN_OXIDASE"/>
    <property type="match status" value="1"/>
</dbReference>
<gene>
    <name evidence="1" type="primary">hemF</name>
    <name type="ordered locus">BWG_2198</name>
</gene>
<protein>
    <recommendedName>
        <fullName evidence="1">Oxygen-dependent coproporphyrinogen-III oxidase</fullName>
        <shortName evidence="1">CPO</shortName>
        <shortName evidence="1">Coprogen oxidase</shortName>
        <shortName evidence="1">Coproporphyrinogenase</shortName>
        <ecNumber evidence="1">1.3.3.3</ecNumber>
    </recommendedName>
</protein>
<feature type="chain" id="PRO_1000205202" description="Oxygen-dependent coproporphyrinogen-III oxidase">
    <location>
        <begin position="1"/>
        <end position="299"/>
    </location>
</feature>
<feature type="region of interest" description="Important for dimerization" evidence="1">
    <location>
        <begin position="240"/>
        <end position="275"/>
    </location>
</feature>
<feature type="active site" description="Proton donor" evidence="1">
    <location>
        <position position="106"/>
    </location>
</feature>
<feature type="binding site" evidence="1">
    <location>
        <position position="92"/>
    </location>
    <ligand>
        <name>substrate</name>
    </ligand>
</feature>
<feature type="binding site" evidence="1">
    <location>
        <position position="96"/>
    </location>
    <ligand>
        <name>Mn(2+)</name>
        <dbReference type="ChEBI" id="CHEBI:29035"/>
    </ligand>
</feature>
<feature type="binding site" evidence="1">
    <location>
        <position position="106"/>
    </location>
    <ligand>
        <name>Mn(2+)</name>
        <dbReference type="ChEBI" id="CHEBI:29035"/>
    </ligand>
</feature>
<feature type="binding site" evidence="1">
    <location>
        <begin position="108"/>
        <end position="110"/>
    </location>
    <ligand>
        <name>substrate</name>
    </ligand>
</feature>
<feature type="binding site" evidence="1">
    <location>
        <position position="145"/>
    </location>
    <ligand>
        <name>Mn(2+)</name>
        <dbReference type="ChEBI" id="CHEBI:29035"/>
    </ligand>
</feature>
<feature type="binding site" evidence="1">
    <location>
        <position position="175"/>
    </location>
    <ligand>
        <name>Mn(2+)</name>
        <dbReference type="ChEBI" id="CHEBI:29035"/>
    </ligand>
</feature>
<feature type="binding site" evidence="1">
    <location>
        <begin position="258"/>
        <end position="260"/>
    </location>
    <ligand>
        <name>substrate</name>
    </ligand>
</feature>
<feature type="site" description="Important for dimerization" evidence="1">
    <location>
        <position position="175"/>
    </location>
</feature>
<sequence>MKPDAHQVKQFLLNLQDTICQQLTAVDGAEFVEDSWQREAGGGGRSRVLRNGGVFEQAGVNFSHVHGEAMPASATAHRPELAGRSFEAMGVSLVVHPHNPYVPTSHANVRFFIAEKPGADPVWWFGGGFDLTPFYGFEEDAIHWHRTARDLCLPFGEDVYPRYKKWCDEYFYLKHRNEQRGIGGLFFDDLNTPDFDRCFAFMQAVGKGYTDAYLPIVERRKAMAYGERERNFQLYRRGRYVEFNLVWDRGTLFGLQTGGRTESILMSMPPLVRWEYDYQPKDGSPEAALSEFIKVRDWV</sequence>
<proteinExistence type="inferred from homology"/>